<feature type="chain" id="PRO_0000430032" description="Ktr system potassium uptake protein A">
    <location>
        <begin position="1"/>
        <end position="220"/>
    </location>
</feature>
<feature type="domain" description="RCK N-terminal" evidence="2">
    <location>
        <begin position="5"/>
        <end position="121"/>
    </location>
</feature>
<feature type="domain" description="RCK C-terminal" evidence="3">
    <location>
        <begin position="138"/>
        <end position="220"/>
    </location>
</feature>
<feature type="binding site" evidence="1">
    <location>
        <position position="15"/>
    </location>
    <ligand>
        <name>ATP</name>
        <dbReference type="ChEBI" id="CHEBI:30616"/>
    </ligand>
</feature>
<feature type="binding site" evidence="1">
    <location>
        <begin position="35"/>
        <end position="37"/>
    </location>
    <ligand>
        <name>ATP</name>
        <dbReference type="ChEBI" id="CHEBI:30616"/>
    </ligand>
</feature>
<feature type="binding site" evidence="1">
    <location>
        <begin position="55"/>
        <end position="56"/>
    </location>
    <ligand>
        <name>ATP</name>
        <dbReference type="ChEBI" id="CHEBI:30616"/>
    </ligand>
</feature>
<feature type="binding site" evidence="1">
    <location>
        <begin position="77"/>
        <end position="79"/>
    </location>
    <ligand>
        <name>ATP</name>
        <dbReference type="ChEBI" id="CHEBI:30616"/>
    </ligand>
</feature>
<feature type="binding site" evidence="1">
    <location>
        <begin position="102"/>
        <end position="104"/>
    </location>
    <ligand>
        <name>ATP</name>
        <dbReference type="ChEBI" id="CHEBI:30616"/>
    </ligand>
</feature>
<feature type="binding site" evidence="1">
    <location>
        <position position="124"/>
    </location>
    <ligand>
        <name>ATP</name>
        <dbReference type="ChEBI" id="CHEBI:30616"/>
    </ligand>
</feature>
<feature type="strand" evidence="8">
    <location>
        <begin position="7"/>
        <end position="11"/>
    </location>
</feature>
<feature type="helix" evidence="8">
    <location>
        <begin position="15"/>
        <end position="26"/>
    </location>
</feature>
<feature type="strand" evidence="8">
    <location>
        <begin position="30"/>
        <end position="36"/>
    </location>
</feature>
<feature type="helix" evidence="8">
    <location>
        <begin position="38"/>
        <end position="45"/>
    </location>
</feature>
<feature type="strand" evidence="8">
    <location>
        <begin position="48"/>
        <end position="53"/>
    </location>
</feature>
<feature type="helix" evidence="8">
    <location>
        <begin position="59"/>
        <end position="65"/>
    </location>
</feature>
<feature type="turn" evidence="8">
    <location>
        <begin position="66"/>
        <end position="69"/>
    </location>
</feature>
<feature type="strand" evidence="8">
    <location>
        <begin position="70"/>
        <end position="75"/>
    </location>
</feature>
<feature type="helix" evidence="8">
    <location>
        <begin position="81"/>
        <end position="93"/>
    </location>
</feature>
<feature type="strand" evidence="8">
    <location>
        <begin position="97"/>
        <end position="102"/>
    </location>
</feature>
<feature type="helix" evidence="8">
    <location>
        <begin position="106"/>
        <end position="115"/>
    </location>
</feature>
<feature type="strand" evidence="8">
    <location>
        <begin position="118"/>
        <end position="121"/>
    </location>
</feature>
<feature type="helix" evidence="8">
    <location>
        <begin position="123"/>
        <end position="136"/>
    </location>
</feature>
<comment type="function">
    <text evidence="4 5 6">Part of the Na(+)-dependent high affinity K(+) uptake system KtrAB. KtrA is the regulatory subunit and plays an important role in the substrate specificity and transport mechanism of the system. Binds ATP but lacks ATPase activity.</text>
</comment>
<comment type="activity regulation">
    <text evidence="5">Requires both ATP and a high membrane potential for activity. Binding of ATP causes a conformational change in KtrA, which promotes formation of the KtrAB complex. Can also bind, with lower affinity, other nucleotides such as NADH or NAD(+), but only ATP can induce a conformational change.</text>
</comment>
<comment type="subunit">
    <text evidence="4 5">The uptake system is composed of KtrA and KtrB.</text>
</comment>
<comment type="subcellular location">
    <subcellularLocation>
        <location evidence="5 6">Cell inner membrane</location>
        <topology evidence="5 6">Peripheral membrane protein</topology>
        <orientation evidence="5 6">Cytoplasmic side</orientation>
    </subcellularLocation>
</comment>
<comment type="similarity">
    <text evidence="7">Belongs to the KtrA potassium transport family.</text>
</comment>
<name>KTRA_VIBAL</name>
<reference key="1">
    <citation type="journal article" date="1998" name="J. Bacteriol.">
        <title>KtrAB, a new type of bacterial K(+)-uptake system from Vibrio alginolyticus.</title>
        <authorList>
            <person name="Nakamura T."/>
            <person name="Yuda R."/>
            <person name="Unemoto T."/>
            <person name="Bakker E.P."/>
        </authorList>
    </citation>
    <scope>NUCLEOTIDE SEQUENCE [GENOMIC DNA]</scope>
    <scope>FUNCTION</scope>
    <scope>SUBCELLULAR LOCATION</scope>
    <scope>GENE NAME</scope>
</reference>
<reference key="2">
    <citation type="journal article" date="2005" name="J. Biol. Chem.">
        <title>All four putative selectivity filter glycine residues in KtrB are essential for high affinity and selective K+ uptake by the KtrAB system from Vibrio alginolyticus.</title>
        <authorList>
            <person name="Tholema N."/>
            <person name="Vor der Brueggen M."/>
            <person name="Maeser P."/>
            <person name="Nakamura T."/>
            <person name="Schroeder J.I."/>
            <person name="Kobayashi H."/>
            <person name="Uozumi N."/>
            <person name="Bakker E.P."/>
        </authorList>
    </citation>
    <scope>FUNCTION</scope>
    <scope>SUBUNIT</scope>
</reference>
<reference key="3">
    <citation type="journal article" date="2007" name="J. Biol. Chem.">
        <title>ATP binding to the KTN/RCK subunit KtrA from the K+ -uptake system KtrAB of Vibrio alginolyticus: its role in the formation of the KtrAB complex and its requirement in vivo.</title>
        <authorList>
            <person name="Kroening N."/>
            <person name="Willenborg M."/>
            <person name="Tholema N."/>
            <person name="Haenelt I."/>
            <person name="Schmid R."/>
            <person name="Bakker E.P."/>
        </authorList>
    </citation>
    <scope>FUNCTION</scope>
    <scope>ATP-BINDING</scope>
    <scope>ACTIVITY REGULATION</scope>
    <scope>SUBUNIT</scope>
    <scope>SUBCELLULAR LOCATION</scope>
</reference>
<protein>
    <recommendedName>
        <fullName>Ktr system potassium uptake protein A</fullName>
        <shortName>K(+)-uptake protein KtrA</shortName>
    </recommendedName>
</protein>
<gene>
    <name type="primary">ktrA</name>
</gene>
<evidence type="ECO:0000250" key="1"/>
<evidence type="ECO:0000255" key="2">
    <source>
        <dbReference type="PROSITE-ProRule" id="PRU00543"/>
    </source>
</evidence>
<evidence type="ECO:0000255" key="3">
    <source>
        <dbReference type="PROSITE-ProRule" id="PRU00544"/>
    </source>
</evidence>
<evidence type="ECO:0000269" key="4">
    <source>
    </source>
</evidence>
<evidence type="ECO:0000269" key="5">
    <source>
    </source>
</evidence>
<evidence type="ECO:0000269" key="6">
    <source>
    </source>
</evidence>
<evidence type="ECO:0000305" key="7"/>
<evidence type="ECO:0007829" key="8">
    <source>
        <dbReference type="PDB" id="7ZP9"/>
    </source>
</evidence>
<accession>O87952</accession>
<organism>
    <name type="scientific">Vibrio alginolyticus</name>
    <dbReference type="NCBI Taxonomy" id="663"/>
    <lineage>
        <taxon>Bacteria</taxon>
        <taxon>Pseudomonadati</taxon>
        <taxon>Pseudomonadota</taxon>
        <taxon>Gammaproteobacteria</taxon>
        <taxon>Vibrionales</taxon>
        <taxon>Vibrionaceae</taxon>
        <taxon>Vibrio</taxon>
    </lineage>
</organism>
<sequence length="220" mass="23806">MKTGDKQFAVIGLGRFGLAVCKELQDSGSQVLAVDINEDRVKEAAGFVSQAIVANCTHEETVAELKLDDYDMVMIAIGADVNASILATLIAKEAGVKSVWVKANDRFQARVLQKIGADHIIMPERDMGIRVARKMLDKRVLEFHPLGSGLAMTEFVVGSRLMGKTLSDLALCKVEGVQVLGYKRGPEIIKAPDMSTTLEIGDLIIVVGPQDKLANKLKSL</sequence>
<proteinExistence type="evidence at protein level"/>
<keyword id="KW-0002">3D-structure</keyword>
<keyword id="KW-0067">ATP-binding</keyword>
<keyword id="KW-0997">Cell inner membrane</keyword>
<keyword id="KW-1003">Cell membrane</keyword>
<keyword id="KW-0406">Ion transport</keyword>
<keyword id="KW-0472">Membrane</keyword>
<keyword id="KW-0547">Nucleotide-binding</keyword>
<keyword id="KW-0630">Potassium</keyword>
<keyword id="KW-0633">Potassium transport</keyword>
<keyword id="KW-0813">Transport</keyword>
<dbReference type="EMBL" id="D89592">
    <property type="protein sequence ID" value="BAA31234.1"/>
    <property type="molecule type" value="Genomic_DNA"/>
</dbReference>
<dbReference type="PDB" id="7ZP9">
    <property type="method" value="EM"/>
    <property type="resolution" value="2.82 A"/>
    <property type="chains" value="A/B/D/E/F/H/J/L=1-220"/>
</dbReference>
<dbReference type="PDB" id="7ZPO">
    <property type="method" value="EM"/>
    <property type="resolution" value="3.24 A"/>
    <property type="chains" value="A/B/D/E/F/H/J/L=1-220"/>
</dbReference>
<dbReference type="PDB" id="7ZPR">
    <property type="method" value="EM"/>
    <property type="resolution" value="3.56 A"/>
    <property type="chains" value="A/B/D/E/F/H/J/L=1-220"/>
</dbReference>
<dbReference type="PDBsum" id="7ZP9"/>
<dbReference type="PDBsum" id="7ZPO"/>
<dbReference type="PDBsum" id="7ZPR"/>
<dbReference type="EMDB" id="EMD-14851"/>
<dbReference type="EMDB" id="EMD-14859"/>
<dbReference type="EMDB" id="EMD-14862"/>
<dbReference type="EMDB" id="EMD-3450"/>
<dbReference type="SMR" id="O87952"/>
<dbReference type="STRING" id="663.BAU10_03570"/>
<dbReference type="TCDB" id="2.A.38.4.2">
    <property type="family name" value="the k(+) transporter (trk) family"/>
</dbReference>
<dbReference type="eggNOG" id="COG0569">
    <property type="taxonomic scope" value="Bacteria"/>
</dbReference>
<dbReference type="SABIO-RK" id="O87952"/>
<dbReference type="GO" id="GO:0005886">
    <property type="term" value="C:plasma membrane"/>
    <property type="evidence" value="ECO:0007669"/>
    <property type="project" value="UniProtKB-SubCell"/>
</dbReference>
<dbReference type="GO" id="GO:0005524">
    <property type="term" value="F:ATP binding"/>
    <property type="evidence" value="ECO:0007669"/>
    <property type="project" value="UniProtKB-KW"/>
</dbReference>
<dbReference type="GO" id="GO:0008324">
    <property type="term" value="F:monoatomic cation transmembrane transporter activity"/>
    <property type="evidence" value="ECO:0007669"/>
    <property type="project" value="InterPro"/>
</dbReference>
<dbReference type="GO" id="GO:0006813">
    <property type="term" value="P:potassium ion transport"/>
    <property type="evidence" value="ECO:0007669"/>
    <property type="project" value="UniProtKB-KW"/>
</dbReference>
<dbReference type="Gene3D" id="3.40.50.720">
    <property type="entry name" value="NAD(P)-binding Rossmann-like Domain"/>
    <property type="match status" value="1"/>
</dbReference>
<dbReference type="Gene3D" id="3.30.70.1450">
    <property type="entry name" value="Regulator of K+ conductance, C-terminal domain"/>
    <property type="match status" value="1"/>
</dbReference>
<dbReference type="InterPro" id="IPR036291">
    <property type="entry name" value="NAD(P)-bd_dom_sf"/>
</dbReference>
<dbReference type="InterPro" id="IPR006037">
    <property type="entry name" value="RCK_C"/>
</dbReference>
<dbReference type="InterPro" id="IPR036721">
    <property type="entry name" value="RCK_C_sf"/>
</dbReference>
<dbReference type="InterPro" id="IPR003148">
    <property type="entry name" value="RCK_N"/>
</dbReference>
<dbReference type="InterPro" id="IPR050721">
    <property type="entry name" value="Trk_Ktr_HKT_K-transport"/>
</dbReference>
<dbReference type="PANTHER" id="PTHR43833:SF7">
    <property type="entry name" value="KTR SYSTEM POTASSIUM UPTAKE PROTEIN C"/>
    <property type="match status" value="1"/>
</dbReference>
<dbReference type="PANTHER" id="PTHR43833">
    <property type="entry name" value="POTASSIUM CHANNEL PROTEIN 2-RELATED-RELATED"/>
    <property type="match status" value="1"/>
</dbReference>
<dbReference type="Pfam" id="PF02080">
    <property type="entry name" value="TrkA_C"/>
    <property type="match status" value="1"/>
</dbReference>
<dbReference type="Pfam" id="PF02254">
    <property type="entry name" value="TrkA_N"/>
    <property type="match status" value="1"/>
</dbReference>
<dbReference type="SUPFAM" id="SSF51735">
    <property type="entry name" value="NAD(P)-binding Rossmann-fold domains"/>
    <property type="match status" value="1"/>
</dbReference>
<dbReference type="SUPFAM" id="SSF116726">
    <property type="entry name" value="TrkA C-terminal domain-like"/>
    <property type="match status" value="1"/>
</dbReference>
<dbReference type="PROSITE" id="PS51202">
    <property type="entry name" value="RCK_C"/>
    <property type="match status" value="1"/>
</dbReference>
<dbReference type="PROSITE" id="PS51201">
    <property type="entry name" value="RCK_N"/>
    <property type="match status" value="1"/>
</dbReference>